<feature type="chain" id="PRO_1000073342" description="Small ribosomal subunit protein uS17">
    <location>
        <begin position="1"/>
        <end position="83"/>
    </location>
</feature>
<gene>
    <name evidence="1" type="primary">rpsQ</name>
    <name type="ordered locus">C8J_1602</name>
</gene>
<comment type="function">
    <text evidence="1">One of the primary rRNA binding proteins, it binds specifically to the 5'-end of 16S ribosomal RNA.</text>
</comment>
<comment type="subunit">
    <text evidence="1">Part of the 30S ribosomal subunit.</text>
</comment>
<comment type="similarity">
    <text evidence="1">Belongs to the universal ribosomal protein uS17 family.</text>
</comment>
<reference key="1">
    <citation type="journal article" date="2007" name="J. Bacteriol.">
        <title>The complete genome sequence of Campylobacter jejuni strain 81116 (NCTC11828).</title>
        <authorList>
            <person name="Pearson B.M."/>
            <person name="Gaskin D.J.H."/>
            <person name="Segers R.P.A.M."/>
            <person name="Wells J.M."/>
            <person name="Nuijten P.J.M."/>
            <person name="van Vliet A.H.M."/>
        </authorList>
    </citation>
    <scope>NUCLEOTIDE SEQUENCE [LARGE SCALE GENOMIC DNA]</scope>
    <source>
        <strain>81116 / NCTC 11828</strain>
    </source>
</reference>
<keyword id="KW-0687">Ribonucleoprotein</keyword>
<keyword id="KW-0689">Ribosomal protein</keyword>
<keyword id="KW-0694">RNA-binding</keyword>
<keyword id="KW-0699">rRNA-binding</keyword>
<accession>A8FP12</accession>
<dbReference type="EMBL" id="CP000814">
    <property type="protein sequence ID" value="ABV53199.1"/>
    <property type="molecule type" value="Genomic_DNA"/>
</dbReference>
<dbReference type="RefSeq" id="WP_002851549.1">
    <property type="nucleotide sequence ID" value="NC_009839.1"/>
</dbReference>
<dbReference type="SMR" id="A8FP12"/>
<dbReference type="KEGG" id="cju:C8J_1602"/>
<dbReference type="HOGENOM" id="CLU_073626_1_1_7"/>
<dbReference type="GO" id="GO:0022627">
    <property type="term" value="C:cytosolic small ribosomal subunit"/>
    <property type="evidence" value="ECO:0007669"/>
    <property type="project" value="TreeGrafter"/>
</dbReference>
<dbReference type="GO" id="GO:0019843">
    <property type="term" value="F:rRNA binding"/>
    <property type="evidence" value="ECO:0007669"/>
    <property type="project" value="UniProtKB-UniRule"/>
</dbReference>
<dbReference type="GO" id="GO:0003735">
    <property type="term" value="F:structural constituent of ribosome"/>
    <property type="evidence" value="ECO:0007669"/>
    <property type="project" value="InterPro"/>
</dbReference>
<dbReference type="GO" id="GO:0006412">
    <property type="term" value="P:translation"/>
    <property type="evidence" value="ECO:0007669"/>
    <property type="project" value="UniProtKB-UniRule"/>
</dbReference>
<dbReference type="CDD" id="cd00364">
    <property type="entry name" value="Ribosomal_uS17"/>
    <property type="match status" value="1"/>
</dbReference>
<dbReference type="Gene3D" id="2.40.50.140">
    <property type="entry name" value="Nucleic acid-binding proteins"/>
    <property type="match status" value="1"/>
</dbReference>
<dbReference type="HAMAP" id="MF_01345_B">
    <property type="entry name" value="Ribosomal_uS17_B"/>
    <property type="match status" value="1"/>
</dbReference>
<dbReference type="InterPro" id="IPR012340">
    <property type="entry name" value="NA-bd_OB-fold"/>
</dbReference>
<dbReference type="InterPro" id="IPR000266">
    <property type="entry name" value="Ribosomal_uS17"/>
</dbReference>
<dbReference type="InterPro" id="IPR019984">
    <property type="entry name" value="Ribosomal_uS17_bact/chlr"/>
</dbReference>
<dbReference type="InterPro" id="IPR019979">
    <property type="entry name" value="Ribosomal_uS17_CS"/>
</dbReference>
<dbReference type="NCBIfam" id="NF004123">
    <property type="entry name" value="PRK05610.1"/>
    <property type="match status" value="1"/>
</dbReference>
<dbReference type="NCBIfam" id="TIGR03635">
    <property type="entry name" value="uS17_bact"/>
    <property type="match status" value="1"/>
</dbReference>
<dbReference type="PANTHER" id="PTHR10744">
    <property type="entry name" value="40S RIBOSOMAL PROTEIN S11 FAMILY MEMBER"/>
    <property type="match status" value="1"/>
</dbReference>
<dbReference type="PANTHER" id="PTHR10744:SF1">
    <property type="entry name" value="SMALL RIBOSOMAL SUBUNIT PROTEIN US17M"/>
    <property type="match status" value="1"/>
</dbReference>
<dbReference type="Pfam" id="PF00366">
    <property type="entry name" value="Ribosomal_S17"/>
    <property type="match status" value="1"/>
</dbReference>
<dbReference type="PRINTS" id="PR00973">
    <property type="entry name" value="RIBOSOMALS17"/>
</dbReference>
<dbReference type="SUPFAM" id="SSF50249">
    <property type="entry name" value="Nucleic acid-binding proteins"/>
    <property type="match status" value="1"/>
</dbReference>
<dbReference type="PROSITE" id="PS00056">
    <property type="entry name" value="RIBOSOMAL_S17"/>
    <property type="match status" value="1"/>
</dbReference>
<protein>
    <recommendedName>
        <fullName evidence="1">Small ribosomal subunit protein uS17</fullName>
    </recommendedName>
    <alternativeName>
        <fullName evidence="2">30S ribosomal protein S17</fullName>
    </alternativeName>
</protein>
<proteinExistence type="inferred from homology"/>
<organism>
    <name type="scientific">Campylobacter jejuni subsp. jejuni serotype O:6 (strain 81116 / NCTC 11828)</name>
    <dbReference type="NCBI Taxonomy" id="407148"/>
    <lineage>
        <taxon>Bacteria</taxon>
        <taxon>Pseudomonadati</taxon>
        <taxon>Campylobacterota</taxon>
        <taxon>Epsilonproteobacteria</taxon>
        <taxon>Campylobacterales</taxon>
        <taxon>Campylobacteraceae</taxon>
        <taxon>Campylobacter</taxon>
    </lineage>
</organism>
<name>RS17_CAMJ8</name>
<sequence length="83" mass="9549">MAFKREIQGVVVKIAGEKTASVLVERKVVHPRYRKIVKRFKKYLIHDERNEVKVGDTVVAVECRPLSKRKSFRLKSVLATGVE</sequence>
<evidence type="ECO:0000255" key="1">
    <source>
        <dbReference type="HAMAP-Rule" id="MF_01345"/>
    </source>
</evidence>
<evidence type="ECO:0000305" key="2"/>